<name>LZTS2_BOVIN</name>
<protein>
    <recommendedName>
        <fullName evidence="4">Leucine zipper putative tumor suppressor 2</fullName>
    </recommendedName>
    <alternativeName>
        <fullName evidence="4">Protein LAPSER1</fullName>
    </alternativeName>
</protein>
<sequence length="667" mass="72466">MAIVQTLPVPLEPAPEAATAQQAPAMGSVSSLISGRPCPGGPAPPRHHGPPGPTFFRQQDGLLRGGYEAQEPLCPAVPPRKAVPGTNFTYINEDFRTESPPSPSSDLEDAREQRARNAHLRGPPPKLIPVSGKLEKNMEKIVIRPTAFKPVLPKPRGVPSLPSFLGPRATGPSGSQGSLTQLFGGPASSSSSSSSSAADKPLILSGWASGCPSGTLSDSGRNSLSSLPTYSTGGAEPATNSPGGHLPSHGPGRGALPGPARGAPTGPSHSDSGRSSSSKSTGSLGGRLAGGLLGSGPRASPDSSSCGERSPPPPPPPPPPSDEALLHCVLEGKLRDREAELQQLRDSLDESEVTMCQVYEERQRHWPREREALREDGVARAQRAQQLLQLQVFQLQQEKRQLQDDFAQLLQEREQLERRCAAFEREQRELGPRLEETKWEVCQKSGEISLLKQQLKESQSELVQKGSELVALRVALREARAALRVSEGRARGLQEAARTRELELEACSQELQRHRQEAERLREKAGQLDSEAAGLREPPVPPATADPFLLAESDEAKAQRAAAGVGGSLRAQVERLRAELQRERRQGEEQRDSFEGERLAWQAEKEQVIRYQKQLQHNYIQMYRRNRQLEQELQQLSLELEARELADLGLAEPAPCICLEEITATEI</sequence>
<keyword id="KW-0131">Cell cycle</keyword>
<keyword id="KW-0132">Cell division</keyword>
<keyword id="KW-0175">Coiled coil</keyword>
<keyword id="KW-0963">Cytoplasm</keyword>
<keyword id="KW-0206">Cytoskeleton</keyword>
<keyword id="KW-0493">Microtubule</keyword>
<keyword id="KW-0498">Mitosis</keyword>
<keyword id="KW-0597">Phosphoprotein</keyword>
<keyword id="KW-1185">Reference proteome</keyword>
<keyword id="KW-0879">Wnt signaling pathway</keyword>
<gene>
    <name evidence="4" type="primary">LZTS2</name>
    <name evidence="4" type="synonym">LAPSER1</name>
</gene>
<reference key="1">
    <citation type="submission" date="2007-06" db="EMBL/GenBank/DDBJ databases">
        <authorList>
            <consortium name="NIH - Mammalian Gene Collection (MGC) project"/>
        </authorList>
    </citation>
    <scope>NUCLEOTIDE SEQUENCE [LARGE SCALE MRNA]</scope>
    <source>
        <strain>Hereford</strain>
        <tissue>Fetal spinal cord</tissue>
    </source>
</reference>
<accession>A5PKL7</accession>
<feature type="chain" id="PRO_0000367895" description="Leucine zipper putative tumor suppressor 2">
    <location>
        <begin position="1"/>
        <end position="667"/>
    </location>
</feature>
<feature type="region of interest" description="Required for centrosomal localization" evidence="1">
    <location>
        <begin position="1"/>
        <end position="333"/>
    </location>
</feature>
<feature type="region of interest" description="Disordered" evidence="5">
    <location>
        <begin position="1"/>
        <end position="132"/>
    </location>
</feature>
<feature type="region of interest" description="Disordered" evidence="5">
    <location>
        <begin position="150"/>
        <end position="325"/>
    </location>
</feature>
<feature type="region of interest" description="Sufficient for interaction with CTNNB1" evidence="1">
    <location>
        <begin position="445"/>
        <end position="667"/>
    </location>
</feature>
<feature type="region of interest" description="Sufficient for interaction with KATNB1 and for inhibition of katanin-mediated microtubule severing" evidence="1">
    <location>
        <begin position="448"/>
        <end position="667"/>
    </location>
</feature>
<feature type="region of interest" description="Disordered" evidence="5">
    <location>
        <begin position="516"/>
        <end position="541"/>
    </location>
</feature>
<feature type="coiled-coil region" evidence="4">
    <location>
        <begin position="329"/>
        <end position="647"/>
    </location>
</feature>
<feature type="short sequence motif" description="Nuclear export signal" evidence="4">
    <location>
        <begin position="629"/>
        <end position="638"/>
    </location>
</feature>
<feature type="compositionally biased region" description="Low complexity" evidence="5">
    <location>
        <begin position="1"/>
        <end position="25"/>
    </location>
</feature>
<feature type="compositionally biased region" description="Polar residues" evidence="5">
    <location>
        <begin position="172"/>
        <end position="181"/>
    </location>
</feature>
<feature type="compositionally biased region" description="Low complexity" evidence="5">
    <location>
        <begin position="187"/>
        <end position="198"/>
    </location>
</feature>
<feature type="compositionally biased region" description="Polar residues" evidence="5">
    <location>
        <begin position="212"/>
        <end position="232"/>
    </location>
</feature>
<feature type="compositionally biased region" description="Low complexity" evidence="5">
    <location>
        <begin position="241"/>
        <end position="282"/>
    </location>
</feature>
<feature type="compositionally biased region" description="Gly residues" evidence="5">
    <location>
        <begin position="283"/>
        <end position="294"/>
    </location>
</feature>
<feature type="compositionally biased region" description="Pro residues" evidence="5">
    <location>
        <begin position="310"/>
        <end position="321"/>
    </location>
</feature>
<feature type="compositionally biased region" description="Basic and acidic residues" evidence="5">
    <location>
        <begin position="516"/>
        <end position="526"/>
    </location>
</feature>
<feature type="modified residue" description="Phosphoserine" evidence="2">
    <location>
        <position position="248"/>
    </location>
</feature>
<feature type="modified residue" description="Phosphoserine" evidence="2">
    <location>
        <position position="295"/>
    </location>
</feature>
<feature type="modified residue" description="Phosphoserine" evidence="3">
    <location>
        <position position="568"/>
    </location>
</feature>
<comment type="function">
    <text evidence="4">Negative regulator of katanin-mediated microtubule severing and release from the centrosome. Required for central spindle formation and the completion of cytokinesis. May negatively regulate axonal outgrowth by preventing the formation of microtubule bundles that are necessary for transport within the elongating axon. Negative regulator of the Wnt signaling pathway. Represses beta-catenin-mediated transcriptional activation by promoting the nuclear exclusion of beta-catenin.</text>
</comment>
<comment type="subunit">
    <text evidence="4">Interacts with KATNB1. Also interacts with CTNNB1, gamma-tubulin and KIF23.</text>
</comment>
<comment type="subcellular location">
    <subcellularLocation>
        <location evidence="4">Cytoplasm</location>
    </subcellularLocation>
    <subcellularLocation>
        <location evidence="4">Cytoplasm</location>
        <location evidence="4">Cytoskeleton</location>
        <location evidence="4">Microtubule organizing center</location>
        <location evidence="4">Centrosome</location>
    </subcellularLocation>
    <text evidence="4">Localized to the centrosome throughout the cell cycle. Localized to the midbody in cells undergoing cytokinesis.</text>
</comment>
<comment type="similarity">
    <text evidence="4">Belongs to the LZTS2 family.</text>
</comment>
<organism>
    <name type="scientific">Bos taurus</name>
    <name type="common">Bovine</name>
    <dbReference type="NCBI Taxonomy" id="9913"/>
    <lineage>
        <taxon>Eukaryota</taxon>
        <taxon>Metazoa</taxon>
        <taxon>Chordata</taxon>
        <taxon>Craniata</taxon>
        <taxon>Vertebrata</taxon>
        <taxon>Euteleostomi</taxon>
        <taxon>Mammalia</taxon>
        <taxon>Eutheria</taxon>
        <taxon>Laurasiatheria</taxon>
        <taxon>Artiodactyla</taxon>
        <taxon>Ruminantia</taxon>
        <taxon>Pecora</taxon>
        <taxon>Bovidae</taxon>
        <taxon>Bovinae</taxon>
        <taxon>Bos</taxon>
    </lineage>
</organism>
<proteinExistence type="evidence at transcript level"/>
<dbReference type="EMBL" id="BC142533">
    <property type="protein sequence ID" value="AAI42534.1"/>
    <property type="molecule type" value="mRNA"/>
</dbReference>
<dbReference type="RefSeq" id="NP_001092332.1">
    <property type="nucleotide sequence ID" value="NM_001098862.2"/>
</dbReference>
<dbReference type="SMR" id="A5PKL7"/>
<dbReference type="FunCoup" id="A5PKL7">
    <property type="interactions" value="513"/>
</dbReference>
<dbReference type="STRING" id="9913.ENSBTAP00000064378"/>
<dbReference type="PaxDb" id="9913-ENSBTAP00000004268"/>
<dbReference type="GeneID" id="504411"/>
<dbReference type="KEGG" id="bta:504411"/>
<dbReference type="CTD" id="84445"/>
<dbReference type="eggNOG" id="ENOG502QWFS">
    <property type="taxonomic scope" value="Eukaryota"/>
</dbReference>
<dbReference type="InParanoid" id="A5PKL7"/>
<dbReference type="OrthoDB" id="10030037at2759"/>
<dbReference type="Proteomes" id="UP000009136">
    <property type="component" value="Unplaced"/>
</dbReference>
<dbReference type="GO" id="GO:0005813">
    <property type="term" value="C:centrosome"/>
    <property type="evidence" value="ECO:0007669"/>
    <property type="project" value="UniProtKB-SubCell"/>
</dbReference>
<dbReference type="GO" id="GO:0005737">
    <property type="term" value="C:cytoplasm"/>
    <property type="evidence" value="ECO:0007669"/>
    <property type="project" value="UniProtKB-SubCell"/>
</dbReference>
<dbReference type="GO" id="GO:0005874">
    <property type="term" value="C:microtubule"/>
    <property type="evidence" value="ECO:0007669"/>
    <property type="project" value="UniProtKB-KW"/>
</dbReference>
<dbReference type="GO" id="GO:0030496">
    <property type="term" value="C:midbody"/>
    <property type="evidence" value="ECO:0007669"/>
    <property type="project" value="UniProtKB-UniRule"/>
</dbReference>
<dbReference type="GO" id="GO:0051013">
    <property type="term" value="P:microtubule severing"/>
    <property type="evidence" value="ECO:0007669"/>
    <property type="project" value="UniProtKB-UniRule"/>
</dbReference>
<dbReference type="GO" id="GO:0000281">
    <property type="term" value="P:mitotic cytokinesis"/>
    <property type="evidence" value="ECO:0007669"/>
    <property type="project" value="UniProtKB-UniRule"/>
</dbReference>
<dbReference type="GO" id="GO:0090090">
    <property type="term" value="P:negative regulation of canonical Wnt signaling pathway"/>
    <property type="evidence" value="ECO:0000318"/>
    <property type="project" value="GO_Central"/>
</dbReference>
<dbReference type="GO" id="GO:0051168">
    <property type="term" value="P:nuclear export"/>
    <property type="evidence" value="ECO:0007669"/>
    <property type="project" value="UniProtKB-UniRule"/>
</dbReference>
<dbReference type="GO" id="GO:0051255">
    <property type="term" value="P:spindle midzone assembly"/>
    <property type="evidence" value="ECO:0007669"/>
    <property type="project" value="UniProtKB-UniRule"/>
</dbReference>
<dbReference type="GO" id="GO:0016055">
    <property type="term" value="P:Wnt signaling pathway"/>
    <property type="evidence" value="ECO:0007669"/>
    <property type="project" value="UniProtKB-KW"/>
</dbReference>
<dbReference type="HAMAP" id="MF_03026">
    <property type="entry name" value="LZTS2"/>
    <property type="match status" value="1"/>
</dbReference>
<dbReference type="InterPro" id="IPR045329">
    <property type="entry name" value="LZTS"/>
</dbReference>
<dbReference type="InterPro" id="IPR028597">
    <property type="entry name" value="LZTS2"/>
</dbReference>
<dbReference type="PANTHER" id="PTHR19354">
    <property type="entry name" value="ZIPPER PUTATIVE TUMOR SUPPRESSOR 2 HOMOLOG-LIKE PROTEIN-RELATED"/>
    <property type="match status" value="1"/>
</dbReference>
<dbReference type="PANTHER" id="PTHR19354:SF4">
    <property type="entry name" value="ZIPPER PUTATIVE TUMOR SUPPRESSOR 2-RELATED"/>
    <property type="match status" value="1"/>
</dbReference>
<dbReference type="Pfam" id="PF06818">
    <property type="entry name" value="Fez1"/>
    <property type="match status" value="1"/>
</dbReference>
<evidence type="ECO:0000250" key="1"/>
<evidence type="ECO:0000250" key="2">
    <source>
        <dbReference type="UniProtKB" id="Q91YU6"/>
    </source>
</evidence>
<evidence type="ECO:0000250" key="3">
    <source>
        <dbReference type="UniProtKB" id="Q9BRK4"/>
    </source>
</evidence>
<evidence type="ECO:0000255" key="4">
    <source>
        <dbReference type="HAMAP-Rule" id="MF_03026"/>
    </source>
</evidence>
<evidence type="ECO:0000256" key="5">
    <source>
        <dbReference type="SAM" id="MobiDB-lite"/>
    </source>
</evidence>